<gene>
    <name evidence="1" type="primary">slyX</name>
    <name type="ordered locus">bsl2402</name>
</gene>
<reference key="1">
    <citation type="journal article" date="2002" name="DNA Res.">
        <title>Complete genomic sequence of nitrogen-fixing symbiotic bacterium Bradyrhizobium japonicum USDA110.</title>
        <authorList>
            <person name="Kaneko T."/>
            <person name="Nakamura Y."/>
            <person name="Sato S."/>
            <person name="Minamisawa K."/>
            <person name="Uchiumi T."/>
            <person name="Sasamoto S."/>
            <person name="Watanabe A."/>
            <person name="Idesawa K."/>
            <person name="Iriguchi M."/>
            <person name="Kawashima K."/>
            <person name="Kohara M."/>
            <person name="Matsumoto M."/>
            <person name="Shimpo S."/>
            <person name="Tsuruoka H."/>
            <person name="Wada T."/>
            <person name="Yamada M."/>
            <person name="Tabata S."/>
        </authorList>
    </citation>
    <scope>NUCLEOTIDE SEQUENCE [LARGE SCALE GENOMIC DNA]</scope>
    <source>
        <strain>JCM 10833 / BCRC 13528 / IAM 13628 / NBRC 14792 / USDA 110</strain>
    </source>
</reference>
<organism>
    <name type="scientific">Bradyrhizobium diazoefficiens (strain JCM 10833 / BCRC 13528 / IAM 13628 / NBRC 14792 / USDA 110)</name>
    <dbReference type="NCBI Taxonomy" id="224911"/>
    <lineage>
        <taxon>Bacteria</taxon>
        <taxon>Pseudomonadati</taxon>
        <taxon>Pseudomonadota</taxon>
        <taxon>Alphaproteobacteria</taxon>
        <taxon>Hyphomicrobiales</taxon>
        <taxon>Nitrobacteraceae</taxon>
        <taxon>Bradyrhizobium</taxon>
    </lineage>
</organism>
<sequence length="72" mass="8282">MTNEIKTLSERIDTLETRLAYQDDTIETLNQTITAQWKQIDALTRQIAQLSERLQEAETNAPGPANERPPHY</sequence>
<accession>Q89SJ8</accession>
<proteinExistence type="inferred from homology"/>
<protein>
    <recommendedName>
        <fullName evidence="1">Protein SlyX homolog</fullName>
    </recommendedName>
</protein>
<feature type="chain" id="PRO_0000209196" description="Protein SlyX homolog">
    <location>
        <begin position="1"/>
        <end position="72"/>
    </location>
</feature>
<comment type="similarity">
    <text evidence="1">Belongs to the SlyX family.</text>
</comment>
<dbReference type="EMBL" id="BA000040">
    <property type="protein sequence ID" value="BAC47667.1"/>
    <property type="molecule type" value="Genomic_DNA"/>
</dbReference>
<dbReference type="RefSeq" id="NP_769042.1">
    <property type="nucleotide sequence ID" value="NC_004463.1"/>
</dbReference>
<dbReference type="RefSeq" id="WP_011085189.1">
    <property type="nucleotide sequence ID" value="NC_004463.1"/>
</dbReference>
<dbReference type="SMR" id="Q89SJ8"/>
<dbReference type="FunCoup" id="Q89SJ8">
    <property type="interactions" value="7"/>
</dbReference>
<dbReference type="STRING" id="224911.AAV28_08915"/>
<dbReference type="EnsemblBacteria" id="BAC47667">
    <property type="protein sequence ID" value="BAC47667"/>
    <property type="gene ID" value="BAC47667"/>
</dbReference>
<dbReference type="GeneID" id="46489441"/>
<dbReference type="KEGG" id="bja:bsl2402"/>
<dbReference type="PATRIC" id="fig|224911.44.peg.1962"/>
<dbReference type="eggNOG" id="COG2900">
    <property type="taxonomic scope" value="Bacteria"/>
</dbReference>
<dbReference type="HOGENOM" id="CLU_180796_5_3_5"/>
<dbReference type="InParanoid" id="Q89SJ8"/>
<dbReference type="OrthoDB" id="5422806at2"/>
<dbReference type="PhylomeDB" id="Q89SJ8"/>
<dbReference type="Proteomes" id="UP000002526">
    <property type="component" value="Chromosome"/>
</dbReference>
<dbReference type="Gene3D" id="1.20.5.300">
    <property type="match status" value="1"/>
</dbReference>
<dbReference type="HAMAP" id="MF_00715">
    <property type="entry name" value="SlyX"/>
    <property type="match status" value="1"/>
</dbReference>
<dbReference type="InterPro" id="IPR007236">
    <property type="entry name" value="SlyX"/>
</dbReference>
<dbReference type="PANTHER" id="PTHR36508">
    <property type="entry name" value="PROTEIN SLYX"/>
    <property type="match status" value="1"/>
</dbReference>
<dbReference type="PANTHER" id="PTHR36508:SF1">
    <property type="entry name" value="PROTEIN SLYX"/>
    <property type="match status" value="1"/>
</dbReference>
<dbReference type="Pfam" id="PF04102">
    <property type="entry name" value="SlyX"/>
    <property type="match status" value="1"/>
</dbReference>
<dbReference type="SUPFAM" id="SSF90257">
    <property type="entry name" value="Myosin rod fragments"/>
    <property type="match status" value="1"/>
</dbReference>
<keyword id="KW-1185">Reference proteome</keyword>
<evidence type="ECO:0000255" key="1">
    <source>
        <dbReference type="HAMAP-Rule" id="MF_00715"/>
    </source>
</evidence>
<name>SLYX_BRADU</name>